<gene>
    <name type="primary">rps12-A</name>
</gene>
<gene>
    <name type="primary">rps12-B</name>
</gene>
<geneLocation type="chloroplast"/>
<proteinExistence type="inferred from homology"/>
<comment type="function">
    <text evidence="1">With S4 and S5 plays an important role in translational accuracy. Located at the interface of the 30S and 50S subunits (By similarity).</text>
</comment>
<comment type="subunit">
    <text evidence="1">Part of the 30S ribosomal subunit.</text>
</comment>
<comment type="subcellular location">
    <subcellularLocation>
        <location>Plastid</location>
        <location>Chloroplast</location>
    </subcellularLocation>
</comment>
<comment type="similarity">
    <text evidence="3">Belongs to the universal ribosomal protein uS12 family.</text>
</comment>
<organism>
    <name type="scientific">Piper cenocladum</name>
    <name type="common">Ant piper</name>
    <dbReference type="NCBI Taxonomy" id="398741"/>
    <lineage>
        <taxon>Eukaryota</taxon>
        <taxon>Viridiplantae</taxon>
        <taxon>Streptophyta</taxon>
        <taxon>Embryophyta</taxon>
        <taxon>Tracheophyta</taxon>
        <taxon>Spermatophyta</taxon>
        <taxon>Magnoliopsida</taxon>
        <taxon>Magnoliidae</taxon>
        <taxon>Piperales</taxon>
        <taxon>Piperaceae</taxon>
        <taxon>Piper</taxon>
    </lineage>
</organism>
<dbReference type="EMBL" id="DQ887677">
    <property type="protein sequence ID" value="ABI14536.1"/>
    <property type="molecule type" value="Genomic_DNA"/>
</dbReference>
<dbReference type="EMBL" id="DQ887677">
    <property type="protein sequence ID" value="ABI14538.1"/>
    <property type="molecule type" value="Genomic_DNA"/>
</dbReference>
<dbReference type="SMR" id="Q06GN6"/>
<dbReference type="GO" id="GO:0009507">
    <property type="term" value="C:chloroplast"/>
    <property type="evidence" value="ECO:0007669"/>
    <property type="project" value="UniProtKB-SubCell"/>
</dbReference>
<dbReference type="GO" id="GO:0015935">
    <property type="term" value="C:small ribosomal subunit"/>
    <property type="evidence" value="ECO:0007669"/>
    <property type="project" value="InterPro"/>
</dbReference>
<dbReference type="GO" id="GO:0019843">
    <property type="term" value="F:rRNA binding"/>
    <property type="evidence" value="ECO:0007669"/>
    <property type="project" value="UniProtKB-UniRule"/>
</dbReference>
<dbReference type="GO" id="GO:0003735">
    <property type="term" value="F:structural constituent of ribosome"/>
    <property type="evidence" value="ECO:0007669"/>
    <property type="project" value="InterPro"/>
</dbReference>
<dbReference type="GO" id="GO:0006412">
    <property type="term" value="P:translation"/>
    <property type="evidence" value="ECO:0007669"/>
    <property type="project" value="UniProtKB-UniRule"/>
</dbReference>
<dbReference type="CDD" id="cd03368">
    <property type="entry name" value="Ribosomal_S12"/>
    <property type="match status" value="1"/>
</dbReference>
<dbReference type="FunFam" id="2.40.50.140:FF:000008">
    <property type="entry name" value="30S ribosomal protein S12, chloroplastic"/>
    <property type="match status" value="1"/>
</dbReference>
<dbReference type="Gene3D" id="2.40.50.140">
    <property type="entry name" value="Nucleic acid-binding proteins"/>
    <property type="match status" value="1"/>
</dbReference>
<dbReference type="HAMAP" id="MF_00403_B">
    <property type="entry name" value="Ribosomal_uS12_B"/>
    <property type="match status" value="1"/>
</dbReference>
<dbReference type="InterPro" id="IPR012340">
    <property type="entry name" value="NA-bd_OB-fold"/>
</dbReference>
<dbReference type="InterPro" id="IPR006032">
    <property type="entry name" value="Ribosomal_uS12"/>
</dbReference>
<dbReference type="InterPro" id="IPR005679">
    <property type="entry name" value="Ribosomal_uS12_bac"/>
</dbReference>
<dbReference type="NCBIfam" id="TIGR00981">
    <property type="entry name" value="rpsL_bact"/>
    <property type="match status" value="1"/>
</dbReference>
<dbReference type="PANTHER" id="PTHR11652">
    <property type="entry name" value="30S RIBOSOMAL PROTEIN S12 FAMILY MEMBER"/>
    <property type="match status" value="1"/>
</dbReference>
<dbReference type="Pfam" id="PF00164">
    <property type="entry name" value="Ribosom_S12_S23"/>
    <property type="match status" value="1"/>
</dbReference>
<dbReference type="PIRSF" id="PIRSF002133">
    <property type="entry name" value="Ribosomal_S12/S23"/>
    <property type="match status" value="1"/>
</dbReference>
<dbReference type="PRINTS" id="PR01034">
    <property type="entry name" value="RIBOSOMALS12"/>
</dbReference>
<dbReference type="SUPFAM" id="SSF50249">
    <property type="entry name" value="Nucleic acid-binding proteins"/>
    <property type="match status" value="1"/>
</dbReference>
<dbReference type="PROSITE" id="PS00055">
    <property type="entry name" value="RIBOSOMAL_S12"/>
    <property type="match status" value="1"/>
</dbReference>
<reference key="1">
    <citation type="journal article" date="2006" name="BMC Evol. Biol.">
        <title>Complete plastid genome sequences of Drimys, Liriodendron, and Piper: implications for the phylogenetic relationships of magnoliids.</title>
        <authorList>
            <person name="Cai Z."/>
            <person name="Penaflor C."/>
            <person name="Kuehl J.V."/>
            <person name="Leebens-Mack J."/>
            <person name="Carlson J.E."/>
            <person name="dePamphilis C.W."/>
            <person name="Boore J.L."/>
            <person name="Jansen R.K."/>
        </authorList>
    </citation>
    <scope>NUCLEOTIDE SEQUENCE [LARGE SCALE GENOMIC DNA]</scope>
</reference>
<evidence type="ECO:0000250" key="1"/>
<evidence type="ECO:0000255" key="2">
    <source>
        <dbReference type="HAMAP-Rule" id="MF_00403"/>
    </source>
</evidence>
<evidence type="ECO:0000305" key="3"/>
<keyword id="KW-0150">Chloroplast</keyword>
<keyword id="KW-0934">Plastid</keyword>
<keyword id="KW-0687">Ribonucleoprotein</keyword>
<keyword id="KW-0689">Ribosomal protein</keyword>
<keyword id="KW-0694">RNA-binding</keyword>
<keyword id="KW-0699">rRNA-binding</keyword>
<accession>Q06GN6</accession>
<name>RR12_PIPCE</name>
<sequence length="123" mass="13764">MPTIKQLIRNTRQPIRNVTKSPALRGCPQRRGTCTRVYTITPKKPNSALRKVARVRLTSGFEITAYIPGIGHNLQEHSVVLVRGGRVKDLPGVRYHIVRGTLDAVGVKDRQQGRSKYGVKKPK</sequence>
<protein>
    <recommendedName>
        <fullName evidence="2">Small ribosomal subunit protein uS12cz/uS12cy</fullName>
    </recommendedName>
    <alternativeName>
        <fullName evidence="3">30S ribosomal protein S12, chloroplastic</fullName>
    </alternativeName>
</protein>
<feature type="chain" id="PRO_0000276625" description="Small ribosomal subunit protein uS12cz/uS12cy">
    <location>
        <begin position="1"/>
        <end position="123"/>
    </location>
</feature>